<sequence length="425" mass="45592">MVMFSQDHVQIVYGSTRICKSLAPANKRKTHRTIVVAPRRGFLRIPPDGQDVNHVKIVPTTTSSSLAPPRDDERRPTPPLRPPLTVYPYGTSLIRRSARDAKLRSKLIVFHITRPALGQHPQNPGISGPAAMDHSEFLTSFRREVDRQTVLTAESAPATVEVCLGDALPGGVMGGGGLPAGVGSASAAVAAAAAAVAGVPVAANPVMPATATVTTPPMIDLTSHHRPLTLFTPASAAAAPAVATNGGNATYILPADCRYAPLFASKYKYVFEEVSRLMRLHDSTAVQLQISASCGNAFQALKSALLKLHNVTVLAGQQLITQTMPHTPQAVATFKFFHQDPNRVLDCIRPVVPRSTSYHETGVYQMWVSGATKKDLFDAVTLCASIVEKQPDVFNINVSLLTYPSIAAPHLPLYNEFTSFRLPTS</sequence>
<name>UL117_HCMVM</name>
<gene>
    <name type="primary">UL117</name>
</gene>
<keyword id="KW-0024">Alternative initiation</keyword>
<keyword id="KW-1048">Host nucleus</keyword>
<keyword id="KW-1185">Reference proteome</keyword>
<comment type="function">
    <text evidence="1">Plays a role in the inhibition of host DNA replication in the infected cell. Targets the mini-chromosome maintenance (MCM) complex and blocks the accumulation of MCM proteins and their loading onto host chromatin (By similarity).</text>
</comment>
<comment type="subcellular location">
    <molecule>Isoform UL117</molecule>
    <subcellularLocation>
        <location evidence="1">Host nucleus</location>
    </subcellularLocation>
    <text evidence="1">The major fraction localizes to nuclear compartments.</text>
</comment>
<comment type="subcellular location">
    <molecule>Isoform UL117.5</molecule>
    <subcellularLocation>
        <location evidence="1">Host nucleus</location>
    </subcellularLocation>
</comment>
<comment type="alternative products">
    <event type="alternative initiation"/>
    <isoform>
        <id>F5HFA5-1</id>
        <name>UL117</name>
        <sequence type="displayed"/>
    </isoform>
    <isoform>
        <id>F5HFA5-2</id>
        <name>UL117.5</name>
        <sequence type="described" ref="VSP_044020"/>
    </isoform>
</comment>
<comment type="similarity">
    <text evidence="3">Belongs to the herpesviridae U84 family.</text>
</comment>
<accession>F5HFA5</accession>
<organismHost>
    <name type="scientific">Homo sapiens</name>
    <name type="common">Human</name>
    <dbReference type="NCBI Taxonomy" id="9606"/>
</organismHost>
<evidence type="ECO:0000250" key="1"/>
<evidence type="ECO:0000256" key="2">
    <source>
        <dbReference type="SAM" id="MobiDB-lite"/>
    </source>
</evidence>
<evidence type="ECO:0000305" key="3"/>
<protein>
    <recommendedName>
        <fullName>Protein UL117</fullName>
        <shortName>pUL117</shortName>
    </recommendedName>
</protein>
<feature type="chain" id="PRO_0000418276" description="Protein UL117">
    <location>
        <begin position="1"/>
        <end position="425"/>
    </location>
</feature>
<feature type="region of interest" description="Disordered" evidence="2">
    <location>
        <begin position="59"/>
        <end position="83"/>
    </location>
</feature>
<feature type="splice variant" id="VSP_044020" description="In isoform UL117.5." evidence="3">
    <location>
        <begin position="1"/>
        <end position="131"/>
    </location>
</feature>
<reference key="1">
    <citation type="journal article" date="2004" name="J. Gen. Virol.">
        <title>Genetic content of wild-type human cytomegalovirus.</title>
        <authorList>
            <person name="Dolan A."/>
            <person name="Cunningham C."/>
            <person name="Hector R.D."/>
            <person name="Hassan-Walker A.F."/>
            <person name="Lee L."/>
            <person name="Addison C."/>
            <person name="Dargan D.J."/>
            <person name="McGeoch D.J."/>
            <person name="Gatherer D."/>
            <person name="Emery V.C."/>
            <person name="Griffiths P.D."/>
            <person name="Sinzger C."/>
            <person name="McSharry B.P."/>
            <person name="Wilkinson G.W.G."/>
            <person name="Davison A.J."/>
        </authorList>
    </citation>
    <scope>NUCLEOTIDE SEQUENCE [LARGE SCALE GENOMIC DNA]</scope>
</reference>
<proteinExistence type="inferred from homology"/>
<organism>
    <name type="scientific">Human cytomegalovirus (strain Merlin)</name>
    <name type="common">HHV-5</name>
    <name type="synonym">Human herpesvirus 5</name>
    <dbReference type="NCBI Taxonomy" id="295027"/>
    <lineage>
        <taxon>Viruses</taxon>
        <taxon>Duplodnaviria</taxon>
        <taxon>Heunggongvirae</taxon>
        <taxon>Peploviricota</taxon>
        <taxon>Herviviricetes</taxon>
        <taxon>Herpesvirales</taxon>
        <taxon>Orthoherpesviridae</taxon>
        <taxon>Betaherpesvirinae</taxon>
        <taxon>Cytomegalovirus</taxon>
        <taxon>Cytomegalovirus humanbeta5</taxon>
        <taxon>Human cytomegalovirus</taxon>
    </lineage>
</organism>
<dbReference type="EMBL" id="AY446894">
    <property type="protein sequence ID" value="AAR31661.1"/>
    <property type="molecule type" value="Genomic_DNA"/>
</dbReference>
<dbReference type="RefSeq" id="YP_081557.1">
    <property type="nucleotide sequence ID" value="NC_006273.2"/>
</dbReference>
<dbReference type="DNASU" id="3077511"/>
<dbReference type="GeneID" id="3077511"/>
<dbReference type="KEGG" id="vg:3077511"/>
<dbReference type="Reactome" id="R-HSA-9610379">
    <property type="pathway name" value="HCMV Late Events"/>
</dbReference>
<dbReference type="Proteomes" id="UP000000938">
    <property type="component" value="Segment"/>
</dbReference>
<dbReference type="GO" id="GO:0042025">
    <property type="term" value="C:host cell nucleus"/>
    <property type="evidence" value="ECO:0007669"/>
    <property type="project" value="UniProtKB-SubCell"/>
</dbReference>
<dbReference type="GO" id="GO:0006355">
    <property type="term" value="P:regulation of DNA-templated transcription"/>
    <property type="evidence" value="ECO:0007669"/>
    <property type="project" value="InterPro"/>
</dbReference>
<dbReference type="InterPro" id="IPR005028">
    <property type="entry name" value="Herpes_IE2_3"/>
</dbReference>
<dbReference type="Pfam" id="PF03361">
    <property type="entry name" value="Herpes_IE2_3"/>
    <property type="match status" value="1"/>
</dbReference>